<keyword id="KW-0963">Cytoplasm</keyword>
<keyword id="KW-0251">Elongation factor</keyword>
<keyword id="KW-0648">Protein biosynthesis</keyword>
<evidence type="ECO:0000255" key="1">
    <source>
        <dbReference type="HAMAP-Rule" id="MF_00050"/>
    </source>
</evidence>
<sequence length="295" mass="32435">MAITAQMVKELREKTGAGMMDCKKALTETNGDMEKAIDFLREKGIAKAAKKADRIAAEGLTFIETNGNDGLILELNSETDFVAKNEGFQTLIKELAAHLLANKPANVEEAMAQTMENGKKVEEHINEAIAKIGEKLTLRRFEIVSKTDADAFGAYLHMGGRIGVLTVLEGSTDEAAAKDVAMHIAAVNPKYIDRDAVTAEEVEHERQVLTQQALNEGKPEKIVAKMVEGRLGKFFEEICLLDQAFVKNPDMKVRQFVESKGGTLKGFVRYAVGEGIEKREDNFAEEVMNQVKGSN</sequence>
<reference key="1">
    <citation type="journal article" date="2006" name="J. Bacteriol.">
        <title>Pathogenomic sequence analysis of Bacillus cereus and Bacillus thuringiensis isolates closely related to Bacillus anthracis.</title>
        <authorList>
            <person name="Han C.S."/>
            <person name="Xie G."/>
            <person name="Challacombe J.F."/>
            <person name="Altherr M.R."/>
            <person name="Bhotika S.S."/>
            <person name="Bruce D."/>
            <person name="Campbell C.S."/>
            <person name="Campbell M.L."/>
            <person name="Chen J."/>
            <person name="Chertkov O."/>
            <person name="Cleland C."/>
            <person name="Dimitrijevic M."/>
            <person name="Doggett N.A."/>
            <person name="Fawcett J.J."/>
            <person name="Glavina T."/>
            <person name="Goodwin L.A."/>
            <person name="Hill K.K."/>
            <person name="Hitchcock P."/>
            <person name="Jackson P.J."/>
            <person name="Keim P."/>
            <person name="Kewalramani A.R."/>
            <person name="Longmire J."/>
            <person name="Lucas S."/>
            <person name="Malfatti S."/>
            <person name="McMurry K."/>
            <person name="Meincke L.J."/>
            <person name="Misra M."/>
            <person name="Moseman B.L."/>
            <person name="Mundt M."/>
            <person name="Munk A.C."/>
            <person name="Okinaka R.T."/>
            <person name="Parson-Quintana B."/>
            <person name="Reilly L.P."/>
            <person name="Richardson P."/>
            <person name="Robinson D.L."/>
            <person name="Rubin E."/>
            <person name="Saunders E."/>
            <person name="Tapia R."/>
            <person name="Tesmer J.G."/>
            <person name="Thayer N."/>
            <person name="Thompson L.S."/>
            <person name="Tice H."/>
            <person name="Ticknor L.O."/>
            <person name="Wills P.L."/>
            <person name="Brettin T.S."/>
            <person name="Gilna P."/>
        </authorList>
    </citation>
    <scope>NUCLEOTIDE SEQUENCE [LARGE SCALE GENOMIC DNA]</scope>
    <source>
        <strain>ZK / E33L</strain>
    </source>
</reference>
<accession>Q636K0</accession>
<organism>
    <name type="scientific">Bacillus cereus (strain ZK / E33L)</name>
    <dbReference type="NCBI Taxonomy" id="288681"/>
    <lineage>
        <taxon>Bacteria</taxon>
        <taxon>Bacillati</taxon>
        <taxon>Bacillota</taxon>
        <taxon>Bacilli</taxon>
        <taxon>Bacillales</taxon>
        <taxon>Bacillaceae</taxon>
        <taxon>Bacillus</taxon>
        <taxon>Bacillus cereus group</taxon>
    </lineage>
</organism>
<gene>
    <name evidence="1" type="primary">tsf</name>
    <name type="ordered locus">BCE33L3585</name>
</gene>
<dbReference type="EMBL" id="CP000001">
    <property type="protein sequence ID" value="AAU16681.1"/>
    <property type="molecule type" value="Genomic_DNA"/>
</dbReference>
<dbReference type="RefSeq" id="WP_001018581.1">
    <property type="nucleotide sequence ID" value="NZ_CP009968.1"/>
</dbReference>
<dbReference type="SMR" id="Q636K0"/>
<dbReference type="GeneID" id="45023654"/>
<dbReference type="KEGG" id="bcz:BCE33L3585"/>
<dbReference type="PATRIC" id="fig|288681.22.peg.1826"/>
<dbReference type="Proteomes" id="UP000002612">
    <property type="component" value="Chromosome"/>
</dbReference>
<dbReference type="GO" id="GO:0005737">
    <property type="term" value="C:cytoplasm"/>
    <property type="evidence" value="ECO:0007669"/>
    <property type="project" value="UniProtKB-SubCell"/>
</dbReference>
<dbReference type="GO" id="GO:0003746">
    <property type="term" value="F:translation elongation factor activity"/>
    <property type="evidence" value="ECO:0007669"/>
    <property type="project" value="UniProtKB-UniRule"/>
</dbReference>
<dbReference type="CDD" id="cd14275">
    <property type="entry name" value="UBA_EF-Ts"/>
    <property type="match status" value="1"/>
</dbReference>
<dbReference type="FunFam" id="1.10.286.20:FF:000003">
    <property type="entry name" value="Elongation factor Ts"/>
    <property type="match status" value="1"/>
</dbReference>
<dbReference type="FunFam" id="1.10.8.10:FF:000001">
    <property type="entry name" value="Elongation factor Ts"/>
    <property type="match status" value="1"/>
</dbReference>
<dbReference type="FunFam" id="3.30.479.20:FF:000005">
    <property type="entry name" value="Elongation factor Ts"/>
    <property type="match status" value="1"/>
</dbReference>
<dbReference type="Gene3D" id="1.10.286.20">
    <property type="match status" value="1"/>
</dbReference>
<dbReference type="Gene3D" id="1.10.8.10">
    <property type="entry name" value="DNA helicase RuvA subunit, C-terminal domain"/>
    <property type="match status" value="1"/>
</dbReference>
<dbReference type="Gene3D" id="3.30.479.20">
    <property type="entry name" value="Elongation factor Ts, dimerisation domain"/>
    <property type="match status" value="2"/>
</dbReference>
<dbReference type="HAMAP" id="MF_00050">
    <property type="entry name" value="EF_Ts"/>
    <property type="match status" value="1"/>
</dbReference>
<dbReference type="InterPro" id="IPR036402">
    <property type="entry name" value="EF-Ts_dimer_sf"/>
</dbReference>
<dbReference type="InterPro" id="IPR001816">
    <property type="entry name" value="Transl_elong_EFTs/EF1B"/>
</dbReference>
<dbReference type="InterPro" id="IPR014039">
    <property type="entry name" value="Transl_elong_EFTs/EF1B_dimer"/>
</dbReference>
<dbReference type="InterPro" id="IPR018101">
    <property type="entry name" value="Transl_elong_Ts_CS"/>
</dbReference>
<dbReference type="InterPro" id="IPR009060">
    <property type="entry name" value="UBA-like_sf"/>
</dbReference>
<dbReference type="NCBIfam" id="TIGR00116">
    <property type="entry name" value="tsf"/>
    <property type="match status" value="1"/>
</dbReference>
<dbReference type="PANTHER" id="PTHR11741">
    <property type="entry name" value="ELONGATION FACTOR TS"/>
    <property type="match status" value="1"/>
</dbReference>
<dbReference type="PANTHER" id="PTHR11741:SF0">
    <property type="entry name" value="ELONGATION FACTOR TS, MITOCHONDRIAL"/>
    <property type="match status" value="1"/>
</dbReference>
<dbReference type="Pfam" id="PF00889">
    <property type="entry name" value="EF_TS"/>
    <property type="match status" value="1"/>
</dbReference>
<dbReference type="SUPFAM" id="SSF54713">
    <property type="entry name" value="Elongation factor Ts (EF-Ts), dimerisation domain"/>
    <property type="match status" value="2"/>
</dbReference>
<dbReference type="SUPFAM" id="SSF46934">
    <property type="entry name" value="UBA-like"/>
    <property type="match status" value="1"/>
</dbReference>
<dbReference type="PROSITE" id="PS01126">
    <property type="entry name" value="EF_TS_1"/>
    <property type="match status" value="1"/>
</dbReference>
<dbReference type="PROSITE" id="PS01127">
    <property type="entry name" value="EF_TS_2"/>
    <property type="match status" value="1"/>
</dbReference>
<comment type="function">
    <text evidence="1">Associates with the EF-Tu.GDP complex and induces the exchange of GDP to GTP. It remains bound to the aminoacyl-tRNA.EF-Tu.GTP complex up to the GTP hydrolysis stage on the ribosome.</text>
</comment>
<comment type="subcellular location">
    <subcellularLocation>
        <location evidence="1">Cytoplasm</location>
    </subcellularLocation>
</comment>
<comment type="similarity">
    <text evidence="1">Belongs to the EF-Ts family.</text>
</comment>
<feature type="chain" id="PRO_0000161071" description="Elongation factor Ts">
    <location>
        <begin position="1"/>
        <end position="295"/>
    </location>
</feature>
<feature type="region of interest" description="Involved in Mg(2+) ion dislocation from EF-Tu" evidence="1">
    <location>
        <begin position="79"/>
        <end position="82"/>
    </location>
</feature>
<name>EFTS_BACCZ</name>
<protein>
    <recommendedName>
        <fullName evidence="1">Elongation factor Ts</fullName>
        <shortName evidence="1">EF-Ts</shortName>
    </recommendedName>
</protein>
<proteinExistence type="inferred from homology"/>